<sequence length="185" mass="20626">MAVEKDQQKDAEAEGLSAATLLPKLIPSGAGREWLERRRATIRSWGSFVDQRRFSRPRNLGELCQRLVRNVEYYQSNYVFVFLGLILYCVATSPMLLVALAVFFGACYILYLRTLQSKFVLFGREVSPAHQYALAGGVSFPFFWLAGAGSAVFWVLGATLVVIGSHAAFHQIEAVDGEELQMEPV</sequence>
<comment type="function">
    <text evidence="2">General Rab protein regulator required for vesicle formation from the Golgi complex. May control vesicle docking and fusion by mediating the action of Rab GTPases to the SNARE complexes. In addition it inhibits the removal of Rab GTPases from the membrane by GDI1.</text>
</comment>
<comment type="subunit">
    <text evidence="1">Homodimer. Interacts with VAMP2 (synaptobrevin-2), prenylated Rab proteins, GDI1, NDRG1 and PCLO (By similarity).</text>
</comment>
<comment type="subcellular location">
    <subcellularLocation>
        <location evidence="2">Cell membrane</location>
        <topology evidence="3">Multi-pass membrane protein</topology>
    </subcellularLocation>
    <subcellularLocation>
        <location evidence="2">Cytoplasm</location>
    </subcellularLocation>
    <subcellularLocation>
        <location evidence="2">Golgi apparatus</location>
    </subcellularLocation>
    <subcellularLocation>
        <location evidence="2">Cytoplasmic vesicle</location>
        <location evidence="2">Secretory vesicle</location>
        <location evidence="2">Synaptic vesicle</location>
    </subcellularLocation>
    <text evidence="2">According to some authors, it is an integral membrane protein, while others showed that it is cytoplasmic and membrane-associated to Golgi and synaptic vesicles.</text>
</comment>
<comment type="similarity">
    <text evidence="4">Belongs to the PRA1 family.</text>
</comment>
<feature type="chain" id="PRO_0000266022" description="Prenylated Rab acceptor protein 1">
    <location>
        <begin position="1"/>
        <end position="185"/>
    </location>
</feature>
<feature type="topological domain" description="Cytoplasmic" evidence="1">
    <location>
        <begin position="1"/>
        <end position="78"/>
    </location>
</feature>
<feature type="transmembrane region" description="Helical" evidence="1">
    <location>
        <begin position="79"/>
        <end position="94"/>
    </location>
</feature>
<feature type="transmembrane region" description="Helical" evidence="1">
    <location>
        <begin position="95"/>
        <end position="112"/>
    </location>
</feature>
<feature type="topological domain" description="Cytoplasmic" evidence="1">
    <location>
        <begin position="113"/>
        <end position="131"/>
    </location>
</feature>
<feature type="transmembrane region" description="Helical" evidence="1">
    <location>
        <begin position="132"/>
        <end position="148"/>
    </location>
</feature>
<feature type="transmembrane region" description="Helical" evidence="1">
    <location>
        <begin position="149"/>
        <end position="165"/>
    </location>
</feature>
<feature type="topological domain" description="Cytoplasmic" evidence="1">
    <location>
        <begin position="166"/>
        <end position="185"/>
    </location>
</feature>
<feature type="region of interest" description="Required for interaction with prenylated RAB3A and VAMP2" evidence="1">
    <location>
        <begin position="30"/>
        <end position="54"/>
    </location>
</feature>
<feature type="region of interest" description="Required for interaction with GDI1" evidence="1">
    <location>
        <begin position="165"/>
        <end position="185"/>
    </location>
</feature>
<feature type="region of interest" description="Homodimerization" evidence="1">
    <location>
        <begin position="175"/>
        <end position="185"/>
    </location>
</feature>
<feature type="region of interest" description="Required for interaction with prenylated RAB3A and VAMP2" evidence="1">
    <location>
        <begin position="175"/>
        <end position="185"/>
    </location>
</feature>
<gene>
    <name type="primary">RABAC1</name>
    <name type="synonym">PRAF1</name>
</gene>
<dbReference type="EMBL" id="BC114897">
    <property type="protein sequence ID" value="AAI14898.1"/>
    <property type="molecule type" value="mRNA"/>
</dbReference>
<dbReference type="RefSeq" id="NP_001069043.1">
    <property type="nucleotide sequence ID" value="NM_001075575.1"/>
</dbReference>
<dbReference type="FunCoup" id="Q1RMH4">
    <property type="interactions" value="797"/>
</dbReference>
<dbReference type="STRING" id="9913.ENSBTAP00000024793"/>
<dbReference type="PaxDb" id="9913-ENSBTAP00000024793"/>
<dbReference type="GeneID" id="512653"/>
<dbReference type="KEGG" id="bta:512653"/>
<dbReference type="CTD" id="10567"/>
<dbReference type="eggNOG" id="KOG3142">
    <property type="taxonomic scope" value="Eukaryota"/>
</dbReference>
<dbReference type="HOGENOM" id="CLU_103851_0_2_1"/>
<dbReference type="InParanoid" id="Q1RMH4"/>
<dbReference type="OrthoDB" id="63113at2759"/>
<dbReference type="TreeFam" id="TF324857"/>
<dbReference type="Proteomes" id="UP000009136">
    <property type="component" value="Unplaced"/>
</dbReference>
<dbReference type="GO" id="GO:0005794">
    <property type="term" value="C:Golgi apparatus"/>
    <property type="evidence" value="ECO:0000318"/>
    <property type="project" value="GO_Central"/>
</dbReference>
<dbReference type="GO" id="GO:0005886">
    <property type="term" value="C:plasma membrane"/>
    <property type="evidence" value="ECO:0007669"/>
    <property type="project" value="UniProtKB-SubCell"/>
</dbReference>
<dbReference type="GO" id="GO:0008021">
    <property type="term" value="C:synaptic vesicle"/>
    <property type="evidence" value="ECO:0007669"/>
    <property type="project" value="UniProtKB-SubCell"/>
</dbReference>
<dbReference type="InterPro" id="IPR004895">
    <property type="entry name" value="Prenylated_rab_accept_PRA1"/>
</dbReference>
<dbReference type="PANTHER" id="PTHR19317">
    <property type="entry name" value="PRENYLATED RAB ACCEPTOR 1-RELATED"/>
    <property type="match status" value="1"/>
</dbReference>
<dbReference type="PANTHER" id="PTHR19317:SF0">
    <property type="entry name" value="PRENYLATED RAB ACCEPTOR PROTEIN 1"/>
    <property type="match status" value="1"/>
</dbReference>
<dbReference type="Pfam" id="PF03208">
    <property type="entry name" value="PRA1"/>
    <property type="match status" value="1"/>
</dbReference>
<evidence type="ECO:0000250" key="1"/>
<evidence type="ECO:0000250" key="2">
    <source>
        <dbReference type="UniProtKB" id="O35394"/>
    </source>
</evidence>
<evidence type="ECO:0000255" key="3"/>
<evidence type="ECO:0000305" key="4"/>
<proteinExistence type="evidence at transcript level"/>
<keyword id="KW-1003">Cell membrane</keyword>
<keyword id="KW-0963">Cytoplasm</keyword>
<keyword id="KW-0968">Cytoplasmic vesicle</keyword>
<keyword id="KW-0333">Golgi apparatus</keyword>
<keyword id="KW-0472">Membrane</keyword>
<keyword id="KW-1185">Reference proteome</keyword>
<keyword id="KW-0770">Synapse</keyword>
<keyword id="KW-0812">Transmembrane</keyword>
<keyword id="KW-1133">Transmembrane helix</keyword>
<accession>Q1RMH4</accession>
<organism>
    <name type="scientific">Bos taurus</name>
    <name type="common">Bovine</name>
    <dbReference type="NCBI Taxonomy" id="9913"/>
    <lineage>
        <taxon>Eukaryota</taxon>
        <taxon>Metazoa</taxon>
        <taxon>Chordata</taxon>
        <taxon>Craniata</taxon>
        <taxon>Vertebrata</taxon>
        <taxon>Euteleostomi</taxon>
        <taxon>Mammalia</taxon>
        <taxon>Eutheria</taxon>
        <taxon>Laurasiatheria</taxon>
        <taxon>Artiodactyla</taxon>
        <taxon>Ruminantia</taxon>
        <taxon>Pecora</taxon>
        <taxon>Bovidae</taxon>
        <taxon>Bovinae</taxon>
        <taxon>Bos</taxon>
    </lineage>
</organism>
<reference key="1">
    <citation type="submission" date="2006-04" db="EMBL/GenBank/DDBJ databases">
        <authorList>
            <consortium name="NIH - Mammalian Gene Collection (MGC) project"/>
        </authorList>
    </citation>
    <scope>NUCLEOTIDE SEQUENCE [LARGE SCALE MRNA]</scope>
    <source>
        <strain>Hereford</strain>
        <tissue>Fetal skin</tissue>
    </source>
</reference>
<protein>
    <recommendedName>
        <fullName>Prenylated Rab acceptor protein 1</fullName>
    </recommendedName>
    <alternativeName>
        <fullName>PRA1 family protein 1</fullName>
    </alternativeName>
</protein>
<name>PRAF1_BOVIN</name>